<dbReference type="EC" id="2.5.1.68"/>
<dbReference type="EMBL" id="AL583925">
    <property type="protein sequence ID" value="CAC31984.1"/>
    <property type="molecule type" value="Genomic_DNA"/>
</dbReference>
<dbReference type="PIR" id="H87217">
    <property type="entry name" value="H87217"/>
</dbReference>
<dbReference type="RefSeq" id="NP_302598.1">
    <property type="nucleotide sequence ID" value="NC_002677.1"/>
</dbReference>
<dbReference type="RefSeq" id="WP_010908917.1">
    <property type="nucleotide sequence ID" value="NC_002677.1"/>
</dbReference>
<dbReference type="SMR" id="Q9CB36"/>
<dbReference type="STRING" id="272631.gene:17576330"/>
<dbReference type="KEGG" id="mle:ML2467"/>
<dbReference type="PATRIC" id="fig|272631.5.peg.4736"/>
<dbReference type="Leproma" id="ML2467"/>
<dbReference type="eggNOG" id="COG0020">
    <property type="taxonomic scope" value="Bacteria"/>
</dbReference>
<dbReference type="HOGENOM" id="CLU_038505_2_0_11"/>
<dbReference type="OrthoDB" id="4191603at2"/>
<dbReference type="UniPathway" id="UPA00772"/>
<dbReference type="Proteomes" id="UP000000806">
    <property type="component" value="Chromosome"/>
</dbReference>
<dbReference type="GO" id="GO:0005886">
    <property type="term" value="C:plasma membrane"/>
    <property type="evidence" value="ECO:0007669"/>
    <property type="project" value="TreeGrafter"/>
</dbReference>
<dbReference type="GO" id="GO:0045547">
    <property type="term" value="F:ditrans,polycis-polyprenyl diphosphate synthase [(2E,6E)-farnesyl diphosphate specific] activity"/>
    <property type="evidence" value="ECO:0007669"/>
    <property type="project" value="TreeGrafter"/>
</dbReference>
<dbReference type="GO" id="GO:0000287">
    <property type="term" value="F:magnesium ion binding"/>
    <property type="evidence" value="ECO:0007669"/>
    <property type="project" value="UniProtKB-UniRule"/>
</dbReference>
<dbReference type="GO" id="GO:0033850">
    <property type="term" value="F:Z-farnesyl diphosphate synthase activity"/>
    <property type="evidence" value="ECO:0007669"/>
    <property type="project" value="UniProtKB-EC"/>
</dbReference>
<dbReference type="GO" id="GO:0071555">
    <property type="term" value="P:cell wall organization"/>
    <property type="evidence" value="ECO:0007669"/>
    <property type="project" value="UniProtKB-KW"/>
</dbReference>
<dbReference type="GO" id="GO:0009252">
    <property type="term" value="P:peptidoglycan biosynthetic process"/>
    <property type="evidence" value="ECO:0007669"/>
    <property type="project" value="UniProtKB-KW"/>
</dbReference>
<dbReference type="GO" id="GO:0016094">
    <property type="term" value="P:polyprenol biosynthetic process"/>
    <property type="evidence" value="ECO:0007669"/>
    <property type="project" value="TreeGrafter"/>
</dbReference>
<dbReference type="GO" id="GO:0008360">
    <property type="term" value="P:regulation of cell shape"/>
    <property type="evidence" value="ECO:0007669"/>
    <property type="project" value="UniProtKB-KW"/>
</dbReference>
<dbReference type="CDD" id="cd00475">
    <property type="entry name" value="Cis_IPPS"/>
    <property type="match status" value="1"/>
</dbReference>
<dbReference type="FunFam" id="3.40.1180.10:FF:000003">
    <property type="entry name" value="Isoprenyl transferase 2"/>
    <property type="match status" value="1"/>
</dbReference>
<dbReference type="Gene3D" id="3.40.1180.10">
    <property type="entry name" value="Decaprenyl diphosphate synthase-like"/>
    <property type="match status" value="1"/>
</dbReference>
<dbReference type="HAMAP" id="MF_01139">
    <property type="entry name" value="ISPT"/>
    <property type="match status" value="1"/>
</dbReference>
<dbReference type="InterPro" id="IPR001441">
    <property type="entry name" value="UPP_synth-like"/>
</dbReference>
<dbReference type="InterPro" id="IPR018520">
    <property type="entry name" value="UPP_synth-like_CS"/>
</dbReference>
<dbReference type="InterPro" id="IPR036424">
    <property type="entry name" value="UPP_synth-like_sf"/>
</dbReference>
<dbReference type="NCBIfam" id="NF011403">
    <property type="entry name" value="PRK14828.1"/>
    <property type="match status" value="1"/>
</dbReference>
<dbReference type="NCBIfam" id="TIGR00055">
    <property type="entry name" value="uppS"/>
    <property type="match status" value="1"/>
</dbReference>
<dbReference type="PANTHER" id="PTHR10291:SF43">
    <property type="entry name" value="DEHYDRODOLICHYL DIPHOSPHATE SYNTHASE COMPLEX SUBUNIT DHDDS"/>
    <property type="match status" value="1"/>
</dbReference>
<dbReference type="PANTHER" id="PTHR10291">
    <property type="entry name" value="DEHYDRODOLICHYL DIPHOSPHATE SYNTHASE FAMILY MEMBER"/>
    <property type="match status" value="1"/>
</dbReference>
<dbReference type="Pfam" id="PF01255">
    <property type="entry name" value="Prenyltransf"/>
    <property type="match status" value="1"/>
</dbReference>
<dbReference type="SUPFAM" id="SSF64005">
    <property type="entry name" value="Undecaprenyl diphosphate synthase"/>
    <property type="match status" value="1"/>
</dbReference>
<dbReference type="PROSITE" id="PS01066">
    <property type="entry name" value="UPP_SYNTHASE"/>
    <property type="match status" value="1"/>
</dbReference>
<proteinExistence type="inferred from homology"/>
<gene>
    <name type="ordered locus">ML2467</name>
</gene>
<organism>
    <name type="scientific">Mycobacterium leprae (strain TN)</name>
    <dbReference type="NCBI Taxonomy" id="272631"/>
    <lineage>
        <taxon>Bacteria</taxon>
        <taxon>Bacillati</taxon>
        <taxon>Actinomycetota</taxon>
        <taxon>Actinomycetes</taxon>
        <taxon>Mycobacteriales</taxon>
        <taxon>Mycobacteriaceae</taxon>
        <taxon>Mycobacterium</taxon>
    </lineage>
</organism>
<accession>Q9CB36</accession>
<keyword id="KW-0133">Cell shape</keyword>
<keyword id="KW-0961">Cell wall biogenesis/degradation</keyword>
<keyword id="KW-0460">Magnesium</keyword>
<keyword id="KW-0479">Metal-binding</keyword>
<keyword id="KW-0573">Peptidoglycan synthesis</keyword>
<keyword id="KW-1185">Reference proteome</keyword>
<keyword id="KW-0808">Transferase</keyword>
<reference key="1">
    <citation type="journal article" date="2001" name="Nature">
        <title>Massive gene decay in the leprosy bacillus.</title>
        <authorList>
            <person name="Cole S.T."/>
            <person name="Eiglmeier K."/>
            <person name="Parkhill J."/>
            <person name="James K.D."/>
            <person name="Thomson N.R."/>
            <person name="Wheeler P.R."/>
            <person name="Honore N."/>
            <person name="Garnier T."/>
            <person name="Churcher C.M."/>
            <person name="Harris D.E."/>
            <person name="Mungall K.L."/>
            <person name="Basham D."/>
            <person name="Brown D."/>
            <person name="Chillingworth T."/>
            <person name="Connor R."/>
            <person name="Davies R.M."/>
            <person name="Devlin K."/>
            <person name="Duthoy S."/>
            <person name="Feltwell T."/>
            <person name="Fraser A."/>
            <person name="Hamlin N."/>
            <person name="Holroyd S."/>
            <person name="Hornsby T."/>
            <person name="Jagels K."/>
            <person name="Lacroix C."/>
            <person name="Maclean J."/>
            <person name="Moule S."/>
            <person name="Murphy L.D."/>
            <person name="Oliver K."/>
            <person name="Quail M.A."/>
            <person name="Rajandream M.A."/>
            <person name="Rutherford K.M."/>
            <person name="Rutter S."/>
            <person name="Seeger K."/>
            <person name="Simon S."/>
            <person name="Simmonds M."/>
            <person name="Skelton J."/>
            <person name="Squares R."/>
            <person name="Squares S."/>
            <person name="Stevens K."/>
            <person name="Taylor K."/>
            <person name="Whitehead S."/>
            <person name="Woodward J.R."/>
            <person name="Barrell B.G."/>
        </authorList>
    </citation>
    <scope>NUCLEOTIDE SEQUENCE [LARGE SCALE GENOMIC DNA]</scope>
    <source>
        <strain>TN</strain>
    </source>
</reference>
<protein>
    <recommendedName>
        <fullName>Short-chain Z-isoprenyl diphosphate synthase</fullName>
        <ecNumber>2.5.1.68</ecNumber>
    </recommendedName>
    <alternativeName>
        <fullName>(2Z,6E)-farnesyl diphosphate synthase</fullName>
    </alternativeName>
    <alternativeName>
        <fullName>Z-FPP synthase</fullName>
    </alternativeName>
    <alternativeName>
        <fullName>Z-isoprenyl diphosphate synthase</fullName>
    </alternativeName>
</protein>
<name>ZFPP_MYCLE</name>
<feature type="chain" id="PRO_0000123747" description="Short-chain Z-isoprenyl diphosphate synthase">
    <location>
        <begin position="1"/>
        <end position="262"/>
    </location>
</feature>
<feature type="active site" evidence="1">
    <location>
        <position position="40"/>
    </location>
</feature>
<feature type="active site" description="Proton acceptor" evidence="1">
    <location>
        <position position="89"/>
    </location>
</feature>
<feature type="binding site" evidence="1">
    <location>
        <position position="40"/>
    </location>
    <ligand>
        <name>Mg(2+)</name>
        <dbReference type="ChEBI" id="CHEBI:18420"/>
    </ligand>
</feature>
<feature type="binding site" evidence="1">
    <location>
        <begin position="41"/>
        <end position="44"/>
    </location>
    <ligand>
        <name>substrate</name>
    </ligand>
</feature>
<feature type="binding site" evidence="1">
    <location>
        <position position="45"/>
    </location>
    <ligand>
        <name>substrate</name>
    </ligand>
</feature>
<feature type="binding site" evidence="1">
    <location>
        <begin position="86"/>
        <end position="88"/>
    </location>
    <ligand>
        <name>substrate</name>
    </ligand>
</feature>
<feature type="binding site" evidence="1">
    <location>
        <position position="92"/>
    </location>
    <ligand>
        <name>substrate</name>
    </ligand>
</feature>
<feature type="binding site" evidence="1">
    <location>
        <position position="211"/>
    </location>
    <ligand>
        <name>substrate</name>
    </ligand>
</feature>
<feature type="binding site" evidence="1">
    <location>
        <begin position="217"/>
        <end position="219"/>
    </location>
    <ligand>
        <name>substrate</name>
    </ligand>
</feature>
<feature type="binding site" evidence="1">
    <location>
        <position position="230"/>
    </location>
    <ligand>
        <name>Mg(2+)</name>
        <dbReference type="ChEBI" id="CHEBI:18420"/>
    </ligand>
</feature>
<evidence type="ECO:0000250" key="1"/>
<evidence type="ECO:0000305" key="2"/>
<sequence length="262" mass="29528">MEIIPPRLKEPLYALYELRLRQGLTASESRLPRHIAVLCDGNRRWARDAGYDDVSYGYRMGAAKIAEMLRWCQEAGIEMTTVYLLSTENLQRDPDELAALIEIITDVVEEICAPANRWSVRTVGDLELLGEEPACRLRGAVESTPGVAPFHVNVAVGYGGRREIVGAVRALLGKELANGATAEELVEAVTVEGIARNLYTSGQPDPDLVIRTSGEQRLSGFLLWQSAYSEMWFTETHWPAFRRVDFLRALRDYSMRHRRYGK</sequence>
<comment type="function">
    <text evidence="1">Generates Z-farnesyl diphosphate (Z-FPP) from isopentenyl pyrophosphate (IPP). Z-FPP is the precursor of decaprenyl diphosphate, which has a central role in the biosynthesis of the mycobacterial cell wall (By similarity).</text>
</comment>
<comment type="catalytic activity">
    <reaction>
        <text>isopentenyl diphosphate + (2E)-geranyl diphosphate = (2Z,6E)-farnesyl diphosphate + diphosphate</text>
        <dbReference type="Rhea" id="RHEA:23300"/>
        <dbReference type="ChEBI" id="CHEBI:33019"/>
        <dbReference type="ChEBI" id="CHEBI:58057"/>
        <dbReference type="ChEBI" id="CHEBI:128769"/>
        <dbReference type="ChEBI" id="CHEBI:162247"/>
        <dbReference type="EC" id="2.5.1.68"/>
    </reaction>
</comment>
<comment type="cofactor">
    <cofactor evidence="1">
        <name>Mg(2+)</name>
        <dbReference type="ChEBI" id="CHEBI:18420"/>
    </cofactor>
    <text evidence="1">Binds 2 magnesium ions per subunit.</text>
</comment>
<comment type="pathway">
    <text>Phospholipid metabolism; decaprenyl phosphate biosynthesis.</text>
</comment>
<comment type="similarity">
    <text evidence="2">Belongs to the UPP synthase family. Z-FPP synthase subfamily.</text>
</comment>